<feature type="chain" id="PRO_0000111795" description="5'-nucleotidase SurE">
    <location>
        <begin position="1"/>
        <end position="255"/>
    </location>
</feature>
<feature type="binding site" evidence="1">
    <location>
        <position position="8"/>
    </location>
    <ligand>
        <name>a divalent metal cation</name>
        <dbReference type="ChEBI" id="CHEBI:60240"/>
    </ligand>
</feature>
<feature type="binding site" evidence="1">
    <location>
        <position position="9"/>
    </location>
    <ligand>
        <name>a divalent metal cation</name>
        <dbReference type="ChEBI" id="CHEBI:60240"/>
    </ligand>
</feature>
<feature type="binding site" evidence="1">
    <location>
        <position position="40"/>
    </location>
    <ligand>
        <name>a divalent metal cation</name>
        <dbReference type="ChEBI" id="CHEBI:60240"/>
    </ligand>
</feature>
<feature type="binding site" evidence="1">
    <location>
        <position position="92"/>
    </location>
    <ligand>
        <name>a divalent metal cation</name>
        <dbReference type="ChEBI" id="CHEBI:60240"/>
    </ligand>
</feature>
<keyword id="KW-0963">Cytoplasm</keyword>
<keyword id="KW-0378">Hydrolase</keyword>
<keyword id="KW-0479">Metal-binding</keyword>
<keyword id="KW-0547">Nucleotide-binding</keyword>
<sequence>MRILLTNDDGIHAEGLAVLERIARKLSDDVWVVAPETDQSGLAHSLTLSEPLRLRQIDARHFALRGTPTDCVIMGVRHVLPGAPDLVLSGVNSGANMADDVTYSGTVAGAMEGTLLGVRAIALSQEYEYAGDRRIVPWETAEAHAPELIGRLMEAGWPEGVLLNLNFPNCAPEEVKGVRVTAQGKLSHDARLDERRDGRGFPYFWLHFGRGKAPVADDSDIAAIRSGCISVTPLHLDLTAHKVRAELGAALGVEA</sequence>
<proteinExistence type="inferred from homology"/>
<name>SURE_BRUSU</name>
<reference key="1">
    <citation type="journal article" date="2002" name="Proc. Natl. Acad. Sci. U.S.A.">
        <title>The Brucella suis genome reveals fundamental similarities between animal and plant pathogens and symbionts.</title>
        <authorList>
            <person name="Paulsen I.T."/>
            <person name="Seshadri R."/>
            <person name="Nelson K.E."/>
            <person name="Eisen J.A."/>
            <person name="Heidelberg J.F."/>
            <person name="Read T.D."/>
            <person name="Dodson R.J."/>
            <person name="Umayam L.A."/>
            <person name="Brinkac L.M."/>
            <person name="Beanan M.J."/>
            <person name="Daugherty S.C."/>
            <person name="DeBoy R.T."/>
            <person name="Durkin A.S."/>
            <person name="Kolonay J.F."/>
            <person name="Madupu R."/>
            <person name="Nelson W.C."/>
            <person name="Ayodeji B."/>
            <person name="Kraul M."/>
            <person name="Shetty J."/>
            <person name="Malek J.A."/>
            <person name="Van Aken S.E."/>
            <person name="Riedmuller S."/>
            <person name="Tettelin H."/>
            <person name="Gill S.R."/>
            <person name="White O."/>
            <person name="Salzberg S.L."/>
            <person name="Hoover D.L."/>
            <person name="Lindler L.E."/>
            <person name="Halling S.M."/>
            <person name="Boyle S.M."/>
            <person name="Fraser C.M."/>
        </authorList>
    </citation>
    <scope>NUCLEOTIDE SEQUENCE [LARGE SCALE GENOMIC DNA]</scope>
    <source>
        <strain>1330</strain>
    </source>
</reference>
<reference key="2">
    <citation type="journal article" date="2011" name="J. Bacteriol.">
        <title>Revised genome sequence of Brucella suis 1330.</title>
        <authorList>
            <person name="Tae H."/>
            <person name="Shallom S."/>
            <person name="Settlage R."/>
            <person name="Preston D."/>
            <person name="Adams L.G."/>
            <person name="Garner H.R."/>
        </authorList>
    </citation>
    <scope>NUCLEOTIDE SEQUENCE [LARGE SCALE GENOMIC DNA]</scope>
    <source>
        <strain>1330</strain>
    </source>
</reference>
<dbReference type="EC" id="3.1.3.5" evidence="1"/>
<dbReference type="EMBL" id="AE014291">
    <property type="protein sequence ID" value="AAN29814.1"/>
    <property type="molecule type" value="Genomic_DNA"/>
</dbReference>
<dbReference type="EMBL" id="CP002997">
    <property type="protein sequence ID" value="AEM18231.1"/>
    <property type="molecule type" value="Genomic_DNA"/>
</dbReference>
<dbReference type="RefSeq" id="WP_004683703.1">
    <property type="nucleotide sequence ID" value="NZ_KN046804.1"/>
</dbReference>
<dbReference type="SMR" id="P66880"/>
<dbReference type="GeneID" id="97533818"/>
<dbReference type="KEGG" id="bms:BR0886"/>
<dbReference type="KEGG" id="bsi:BS1330_I0882"/>
<dbReference type="PATRIC" id="fig|204722.21.peg.2559"/>
<dbReference type="HOGENOM" id="CLU_045192_1_2_5"/>
<dbReference type="PhylomeDB" id="P66880"/>
<dbReference type="Proteomes" id="UP000007104">
    <property type="component" value="Chromosome I"/>
</dbReference>
<dbReference type="GO" id="GO:0005737">
    <property type="term" value="C:cytoplasm"/>
    <property type="evidence" value="ECO:0007669"/>
    <property type="project" value="UniProtKB-SubCell"/>
</dbReference>
<dbReference type="GO" id="GO:0008254">
    <property type="term" value="F:3'-nucleotidase activity"/>
    <property type="evidence" value="ECO:0007669"/>
    <property type="project" value="TreeGrafter"/>
</dbReference>
<dbReference type="GO" id="GO:0008253">
    <property type="term" value="F:5'-nucleotidase activity"/>
    <property type="evidence" value="ECO:0007669"/>
    <property type="project" value="UniProtKB-UniRule"/>
</dbReference>
<dbReference type="GO" id="GO:0004309">
    <property type="term" value="F:exopolyphosphatase activity"/>
    <property type="evidence" value="ECO:0007669"/>
    <property type="project" value="TreeGrafter"/>
</dbReference>
<dbReference type="GO" id="GO:0046872">
    <property type="term" value="F:metal ion binding"/>
    <property type="evidence" value="ECO:0007669"/>
    <property type="project" value="UniProtKB-UniRule"/>
</dbReference>
<dbReference type="GO" id="GO:0000166">
    <property type="term" value="F:nucleotide binding"/>
    <property type="evidence" value="ECO:0007669"/>
    <property type="project" value="UniProtKB-KW"/>
</dbReference>
<dbReference type="FunFam" id="3.40.1210.10:FF:000001">
    <property type="entry name" value="5'/3'-nucleotidase SurE"/>
    <property type="match status" value="1"/>
</dbReference>
<dbReference type="Gene3D" id="3.40.1210.10">
    <property type="entry name" value="Survival protein SurE-like phosphatase/nucleotidase"/>
    <property type="match status" value="1"/>
</dbReference>
<dbReference type="HAMAP" id="MF_00060">
    <property type="entry name" value="SurE"/>
    <property type="match status" value="1"/>
</dbReference>
<dbReference type="InterPro" id="IPR030048">
    <property type="entry name" value="SurE"/>
</dbReference>
<dbReference type="InterPro" id="IPR002828">
    <property type="entry name" value="SurE-like_Pase/nucleotidase"/>
</dbReference>
<dbReference type="InterPro" id="IPR036523">
    <property type="entry name" value="SurE-like_sf"/>
</dbReference>
<dbReference type="NCBIfam" id="NF001490">
    <property type="entry name" value="PRK00346.1-4"/>
    <property type="match status" value="1"/>
</dbReference>
<dbReference type="NCBIfam" id="TIGR00087">
    <property type="entry name" value="surE"/>
    <property type="match status" value="1"/>
</dbReference>
<dbReference type="PANTHER" id="PTHR30457">
    <property type="entry name" value="5'-NUCLEOTIDASE SURE"/>
    <property type="match status" value="1"/>
</dbReference>
<dbReference type="PANTHER" id="PTHR30457:SF12">
    <property type="entry name" value="5'_3'-NUCLEOTIDASE SURE"/>
    <property type="match status" value="1"/>
</dbReference>
<dbReference type="Pfam" id="PF01975">
    <property type="entry name" value="SurE"/>
    <property type="match status" value="1"/>
</dbReference>
<dbReference type="SUPFAM" id="SSF64167">
    <property type="entry name" value="SurE-like"/>
    <property type="match status" value="1"/>
</dbReference>
<organism>
    <name type="scientific">Brucella suis biovar 1 (strain 1330)</name>
    <dbReference type="NCBI Taxonomy" id="204722"/>
    <lineage>
        <taxon>Bacteria</taxon>
        <taxon>Pseudomonadati</taxon>
        <taxon>Pseudomonadota</taxon>
        <taxon>Alphaproteobacteria</taxon>
        <taxon>Hyphomicrobiales</taxon>
        <taxon>Brucellaceae</taxon>
        <taxon>Brucella/Ochrobactrum group</taxon>
        <taxon>Brucella</taxon>
    </lineage>
</organism>
<comment type="function">
    <text evidence="1">Nucleotidase that shows phosphatase activity on nucleoside 5'-monophosphates.</text>
</comment>
<comment type="catalytic activity">
    <reaction evidence="1">
        <text>a ribonucleoside 5'-phosphate + H2O = a ribonucleoside + phosphate</text>
        <dbReference type="Rhea" id="RHEA:12484"/>
        <dbReference type="ChEBI" id="CHEBI:15377"/>
        <dbReference type="ChEBI" id="CHEBI:18254"/>
        <dbReference type="ChEBI" id="CHEBI:43474"/>
        <dbReference type="ChEBI" id="CHEBI:58043"/>
        <dbReference type="EC" id="3.1.3.5"/>
    </reaction>
</comment>
<comment type="cofactor">
    <cofactor evidence="1">
        <name>a divalent metal cation</name>
        <dbReference type="ChEBI" id="CHEBI:60240"/>
    </cofactor>
    <text evidence="1">Binds 1 divalent metal cation per subunit.</text>
</comment>
<comment type="subcellular location">
    <subcellularLocation>
        <location evidence="1">Cytoplasm</location>
    </subcellularLocation>
</comment>
<comment type="similarity">
    <text evidence="1">Belongs to the SurE nucleotidase family.</text>
</comment>
<accession>P66880</accession>
<accession>G0K9B4</accession>
<accession>Q8YGS7</accession>
<evidence type="ECO:0000255" key="1">
    <source>
        <dbReference type="HAMAP-Rule" id="MF_00060"/>
    </source>
</evidence>
<protein>
    <recommendedName>
        <fullName evidence="1">5'-nucleotidase SurE</fullName>
        <ecNumber evidence="1">3.1.3.5</ecNumber>
    </recommendedName>
    <alternativeName>
        <fullName evidence="1">Nucleoside 5'-monophosphate phosphohydrolase</fullName>
    </alternativeName>
</protein>
<gene>
    <name evidence="1" type="primary">surE</name>
    <name type="ordered locus">BR0886</name>
    <name type="ordered locus">BS1330_I0882</name>
</gene>